<proteinExistence type="inferred from homology"/>
<sequence>MTKLLLVAAGGALGSVARYLVGVQALRLFGSNWPYGTFIVNLTGGLLMGLLAAWLALRGGAQQEHWRVLLGVGVMGGFTTFSAFSLETALMIEKRAYAQAFTYTTASVILSVAAIFAGLLIARRIFSV</sequence>
<evidence type="ECO:0000255" key="1">
    <source>
        <dbReference type="HAMAP-Rule" id="MF_00454"/>
    </source>
</evidence>
<dbReference type="EMBL" id="CP000927">
    <property type="protein sequence ID" value="ABZ70786.1"/>
    <property type="molecule type" value="Genomic_DNA"/>
</dbReference>
<dbReference type="SMR" id="B0T2G5"/>
<dbReference type="STRING" id="366602.Caul_1657"/>
<dbReference type="KEGG" id="cak:Caul_1657"/>
<dbReference type="eggNOG" id="COG0239">
    <property type="taxonomic scope" value="Bacteria"/>
</dbReference>
<dbReference type="HOGENOM" id="CLU_114342_2_3_5"/>
<dbReference type="OrthoDB" id="9806299at2"/>
<dbReference type="GO" id="GO:0005886">
    <property type="term" value="C:plasma membrane"/>
    <property type="evidence" value="ECO:0007669"/>
    <property type="project" value="UniProtKB-SubCell"/>
</dbReference>
<dbReference type="GO" id="GO:0062054">
    <property type="term" value="F:fluoride channel activity"/>
    <property type="evidence" value="ECO:0007669"/>
    <property type="project" value="UniProtKB-UniRule"/>
</dbReference>
<dbReference type="GO" id="GO:0046872">
    <property type="term" value="F:metal ion binding"/>
    <property type="evidence" value="ECO:0007669"/>
    <property type="project" value="UniProtKB-KW"/>
</dbReference>
<dbReference type="GO" id="GO:0140114">
    <property type="term" value="P:cellular detoxification of fluoride"/>
    <property type="evidence" value="ECO:0007669"/>
    <property type="project" value="UniProtKB-UniRule"/>
</dbReference>
<dbReference type="HAMAP" id="MF_00454">
    <property type="entry name" value="FluC"/>
    <property type="match status" value="1"/>
</dbReference>
<dbReference type="InterPro" id="IPR003691">
    <property type="entry name" value="FluC"/>
</dbReference>
<dbReference type="NCBIfam" id="TIGR00494">
    <property type="entry name" value="crcB"/>
    <property type="match status" value="1"/>
</dbReference>
<dbReference type="NCBIfam" id="NF010791">
    <property type="entry name" value="PRK14195.1"/>
    <property type="match status" value="1"/>
</dbReference>
<dbReference type="PANTHER" id="PTHR28259">
    <property type="entry name" value="FLUORIDE EXPORT PROTEIN 1-RELATED"/>
    <property type="match status" value="1"/>
</dbReference>
<dbReference type="PANTHER" id="PTHR28259:SF1">
    <property type="entry name" value="FLUORIDE EXPORT PROTEIN 1-RELATED"/>
    <property type="match status" value="1"/>
</dbReference>
<dbReference type="Pfam" id="PF02537">
    <property type="entry name" value="CRCB"/>
    <property type="match status" value="1"/>
</dbReference>
<reference key="1">
    <citation type="submission" date="2008-01" db="EMBL/GenBank/DDBJ databases">
        <title>Complete sequence of chromosome of Caulobacter sp. K31.</title>
        <authorList>
            <consortium name="US DOE Joint Genome Institute"/>
            <person name="Copeland A."/>
            <person name="Lucas S."/>
            <person name="Lapidus A."/>
            <person name="Barry K."/>
            <person name="Glavina del Rio T."/>
            <person name="Dalin E."/>
            <person name="Tice H."/>
            <person name="Pitluck S."/>
            <person name="Bruce D."/>
            <person name="Goodwin L."/>
            <person name="Thompson L.S."/>
            <person name="Brettin T."/>
            <person name="Detter J.C."/>
            <person name="Han C."/>
            <person name="Schmutz J."/>
            <person name="Larimer F."/>
            <person name="Land M."/>
            <person name="Hauser L."/>
            <person name="Kyrpides N."/>
            <person name="Kim E."/>
            <person name="Stephens C."/>
            <person name="Richardson P."/>
        </authorList>
    </citation>
    <scope>NUCLEOTIDE SEQUENCE [LARGE SCALE GENOMIC DNA]</scope>
    <source>
        <strain>K31</strain>
    </source>
</reference>
<protein>
    <recommendedName>
        <fullName evidence="1">Fluoride-specific ion channel FluC</fullName>
    </recommendedName>
</protein>
<accession>B0T2G5</accession>
<comment type="function">
    <text evidence="1">Fluoride-specific ion channel. Important for reducing fluoride concentration in the cell, thus reducing its toxicity.</text>
</comment>
<comment type="catalytic activity">
    <reaction evidence="1">
        <text>fluoride(in) = fluoride(out)</text>
        <dbReference type="Rhea" id="RHEA:76159"/>
        <dbReference type="ChEBI" id="CHEBI:17051"/>
    </reaction>
    <physiologicalReaction direction="left-to-right" evidence="1">
        <dbReference type="Rhea" id="RHEA:76160"/>
    </physiologicalReaction>
</comment>
<comment type="activity regulation">
    <text evidence="1">Na(+) is not transported, but it plays an essential structural role and its presence is essential for fluoride channel function.</text>
</comment>
<comment type="subcellular location">
    <subcellularLocation>
        <location evidence="1">Cell inner membrane</location>
        <topology evidence="1">Multi-pass membrane protein</topology>
    </subcellularLocation>
</comment>
<comment type="similarity">
    <text evidence="1">Belongs to the fluoride channel Fluc/FEX (TC 1.A.43) family.</text>
</comment>
<keyword id="KW-0997">Cell inner membrane</keyword>
<keyword id="KW-1003">Cell membrane</keyword>
<keyword id="KW-0407">Ion channel</keyword>
<keyword id="KW-0406">Ion transport</keyword>
<keyword id="KW-0472">Membrane</keyword>
<keyword id="KW-0479">Metal-binding</keyword>
<keyword id="KW-0915">Sodium</keyword>
<keyword id="KW-0812">Transmembrane</keyword>
<keyword id="KW-1133">Transmembrane helix</keyword>
<keyword id="KW-0813">Transport</keyword>
<gene>
    <name evidence="1" type="primary">fluC</name>
    <name evidence="1" type="synonym">crcB</name>
    <name type="ordered locus">Caul_1657</name>
</gene>
<organism>
    <name type="scientific">Caulobacter sp. (strain K31)</name>
    <dbReference type="NCBI Taxonomy" id="366602"/>
    <lineage>
        <taxon>Bacteria</taxon>
        <taxon>Pseudomonadati</taxon>
        <taxon>Pseudomonadota</taxon>
        <taxon>Alphaproteobacteria</taxon>
        <taxon>Caulobacterales</taxon>
        <taxon>Caulobacteraceae</taxon>
        <taxon>Caulobacter</taxon>
    </lineage>
</organism>
<feature type="chain" id="PRO_1000081008" description="Fluoride-specific ion channel FluC">
    <location>
        <begin position="1"/>
        <end position="128"/>
    </location>
</feature>
<feature type="transmembrane region" description="Helical" evidence="1">
    <location>
        <begin position="4"/>
        <end position="24"/>
    </location>
</feature>
<feature type="transmembrane region" description="Helical" evidence="1">
    <location>
        <begin position="37"/>
        <end position="57"/>
    </location>
</feature>
<feature type="transmembrane region" description="Helical" evidence="1">
    <location>
        <begin position="72"/>
        <end position="92"/>
    </location>
</feature>
<feature type="transmembrane region" description="Helical" evidence="1">
    <location>
        <begin position="101"/>
        <end position="121"/>
    </location>
</feature>
<feature type="binding site" evidence="1">
    <location>
        <position position="76"/>
    </location>
    <ligand>
        <name>Na(+)</name>
        <dbReference type="ChEBI" id="CHEBI:29101"/>
        <note>structural</note>
    </ligand>
</feature>
<feature type="binding site" evidence="1">
    <location>
        <position position="79"/>
    </location>
    <ligand>
        <name>Na(+)</name>
        <dbReference type="ChEBI" id="CHEBI:29101"/>
        <note>structural</note>
    </ligand>
</feature>
<name>FLUC_CAUSK</name>